<comment type="function">
    <text evidence="1">Involved in transcription antitermination. Required for transcription of ribosomal RNA (rRNA) genes. Binds specifically to the boxA antiterminator sequence of the ribosomal RNA (rrn) operons.</text>
</comment>
<comment type="similarity">
    <text evidence="1">Belongs to the NusB family.</text>
</comment>
<evidence type="ECO:0000255" key="1">
    <source>
        <dbReference type="HAMAP-Rule" id="MF_00073"/>
    </source>
</evidence>
<accession>A1K279</accession>
<sequence>MSSRMARRRARELALQGVYQWLLSGNSPQVVEAHVEAEAADFDKVDRELFVMLLRGTLDNVGALQDEFSPFIHRPIEELSPIERAILLLGTHELKHNIETPYRVVINEAIELAKAYGGTDGHRFVNGVLDKLAARLRSIEVEAARAKKDAGDGQA</sequence>
<organism>
    <name type="scientific">Azoarcus sp. (strain BH72)</name>
    <dbReference type="NCBI Taxonomy" id="418699"/>
    <lineage>
        <taxon>Bacteria</taxon>
        <taxon>Pseudomonadati</taxon>
        <taxon>Pseudomonadota</taxon>
        <taxon>Betaproteobacteria</taxon>
        <taxon>Rhodocyclales</taxon>
        <taxon>Zoogloeaceae</taxon>
        <taxon>Azoarcus</taxon>
    </lineage>
</organism>
<reference key="1">
    <citation type="journal article" date="2006" name="Nat. Biotechnol.">
        <title>Complete genome of the mutualistic, N2-fixing grass endophyte Azoarcus sp. strain BH72.</title>
        <authorList>
            <person name="Krause A."/>
            <person name="Ramakumar A."/>
            <person name="Bartels D."/>
            <person name="Battistoni F."/>
            <person name="Bekel T."/>
            <person name="Boch J."/>
            <person name="Boehm M."/>
            <person name="Friedrich F."/>
            <person name="Hurek T."/>
            <person name="Krause L."/>
            <person name="Linke B."/>
            <person name="McHardy A.C."/>
            <person name="Sarkar A."/>
            <person name="Schneiker S."/>
            <person name="Syed A.A."/>
            <person name="Thauer R."/>
            <person name="Vorhoelter F.-J."/>
            <person name="Weidner S."/>
            <person name="Puehler A."/>
            <person name="Reinhold-Hurek B."/>
            <person name="Kaiser O."/>
            <person name="Goesmann A."/>
        </authorList>
    </citation>
    <scope>NUCLEOTIDE SEQUENCE [LARGE SCALE GENOMIC DNA]</scope>
    <source>
        <strain>BH72</strain>
    </source>
</reference>
<keyword id="KW-1185">Reference proteome</keyword>
<keyword id="KW-0694">RNA-binding</keyword>
<keyword id="KW-0804">Transcription</keyword>
<keyword id="KW-0889">Transcription antitermination</keyword>
<keyword id="KW-0805">Transcription regulation</keyword>
<protein>
    <recommendedName>
        <fullName evidence="1">Transcription antitermination protein NusB</fullName>
    </recommendedName>
    <alternativeName>
        <fullName evidence="1">Antitermination factor NusB</fullName>
    </alternativeName>
</protein>
<dbReference type="EMBL" id="AM406670">
    <property type="protein sequence ID" value="CAL92934.1"/>
    <property type="molecule type" value="Genomic_DNA"/>
</dbReference>
<dbReference type="RefSeq" id="WP_011764052.1">
    <property type="nucleotide sequence ID" value="NC_008702.1"/>
</dbReference>
<dbReference type="SMR" id="A1K279"/>
<dbReference type="STRING" id="62928.azo0317"/>
<dbReference type="KEGG" id="aoa:dqs_0330"/>
<dbReference type="KEGG" id="azo:azo0317"/>
<dbReference type="eggNOG" id="COG0781">
    <property type="taxonomic scope" value="Bacteria"/>
</dbReference>
<dbReference type="HOGENOM" id="CLU_087843_4_1_4"/>
<dbReference type="OrthoDB" id="9789556at2"/>
<dbReference type="Proteomes" id="UP000002588">
    <property type="component" value="Chromosome"/>
</dbReference>
<dbReference type="GO" id="GO:0005829">
    <property type="term" value="C:cytosol"/>
    <property type="evidence" value="ECO:0007669"/>
    <property type="project" value="TreeGrafter"/>
</dbReference>
<dbReference type="GO" id="GO:0003723">
    <property type="term" value="F:RNA binding"/>
    <property type="evidence" value="ECO:0007669"/>
    <property type="project" value="UniProtKB-UniRule"/>
</dbReference>
<dbReference type="GO" id="GO:0006353">
    <property type="term" value="P:DNA-templated transcription termination"/>
    <property type="evidence" value="ECO:0007669"/>
    <property type="project" value="UniProtKB-UniRule"/>
</dbReference>
<dbReference type="GO" id="GO:0031564">
    <property type="term" value="P:transcription antitermination"/>
    <property type="evidence" value="ECO:0007669"/>
    <property type="project" value="UniProtKB-KW"/>
</dbReference>
<dbReference type="Gene3D" id="1.10.940.10">
    <property type="entry name" value="NusB-like"/>
    <property type="match status" value="1"/>
</dbReference>
<dbReference type="HAMAP" id="MF_00073">
    <property type="entry name" value="NusB"/>
    <property type="match status" value="1"/>
</dbReference>
<dbReference type="InterPro" id="IPR035926">
    <property type="entry name" value="NusB-like_sf"/>
</dbReference>
<dbReference type="InterPro" id="IPR011605">
    <property type="entry name" value="NusB_fam"/>
</dbReference>
<dbReference type="InterPro" id="IPR006027">
    <property type="entry name" value="NusB_RsmB_TIM44"/>
</dbReference>
<dbReference type="NCBIfam" id="TIGR01951">
    <property type="entry name" value="nusB"/>
    <property type="match status" value="1"/>
</dbReference>
<dbReference type="PANTHER" id="PTHR11078:SF3">
    <property type="entry name" value="ANTITERMINATION NUSB DOMAIN-CONTAINING PROTEIN"/>
    <property type="match status" value="1"/>
</dbReference>
<dbReference type="PANTHER" id="PTHR11078">
    <property type="entry name" value="N UTILIZATION SUBSTANCE PROTEIN B-RELATED"/>
    <property type="match status" value="1"/>
</dbReference>
<dbReference type="Pfam" id="PF01029">
    <property type="entry name" value="NusB"/>
    <property type="match status" value="1"/>
</dbReference>
<dbReference type="SUPFAM" id="SSF48013">
    <property type="entry name" value="NusB-like"/>
    <property type="match status" value="1"/>
</dbReference>
<gene>
    <name evidence="1" type="primary">nusB</name>
    <name type="ordered locus">azo0317</name>
</gene>
<feature type="chain" id="PRO_1000023706" description="Transcription antitermination protein NusB">
    <location>
        <begin position="1"/>
        <end position="155"/>
    </location>
</feature>
<name>NUSB_AZOSB</name>
<proteinExistence type="inferred from homology"/>